<organism>
    <name type="scientific">Paraburkholderia phymatum (strain DSM 17167 / CIP 108236 / LMG 21445 / STM815)</name>
    <name type="common">Burkholderia phymatum</name>
    <dbReference type="NCBI Taxonomy" id="391038"/>
    <lineage>
        <taxon>Bacteria</taxon>
        <taxon>Pseudomonadati</taxon>
        <taxon>Pseudomonadota</taxon>
        <taxon>Betaproteobacteria</taxon>
        <taxon>Burkholderiales</taxon>
        <taxon>Burkholderiaceae</taxon>
        <taxon>Paraburkholderia</taxon>
    </lineage>
</organism>
<keyword id="KW-0012">Acyltransferase</keyword>
<keyword id="KW-0133">Cell shape</keyword>
<keyword id="KW-0961">Cell wall biogenesis/degradation</keyword>
<keyword id="KW-0963">Cytoplasm</keyword>
<keyword id="KW-0460">Magnesium</keyword>
<keyword id="KW-0479">Metal-binding</keyword>
<keyword id="KW-0511">Multifunctional enzyme</keyword>
<keyword id="KW-0548">Nucleotidyltransferase</keyword>
<keyword id="KW-0573">Peptidoglycan synthesis</keyword>
<keyword id="KW-1185">Reference proteome</keyword>
<keyword id="KW-0677">Repeat</keyword>
<keyword id="KW-0808">Transferase</keyword>
<gene>
    <name evidence="1" type="primary">glmU</name>
    <name type="ordered locus">Bphy_2891</name>
</gene>
<evidence type="ECO:0000255" key="1">
    <source>
        <dbReference type="HAMAP-Rule" id="MF_01631"/>
    </source>
</evidence>
<proteinExistence type="inferred from homology"/>
<protein>
    <recommendedName>
        <fullName evidence="1">Bifunctional protein GlmU</fullName>
    </recommendedName>
    <domain>
        <recommendedName>
            <fullName evidence="1">UDP-N-acetylglucosamine pyrophosphorylase</fullName>
            <ecNumber evidence="1">2.7.7.23</ecNumber>
        </recommendedName>
        <alternativeName>
            <fullName evidence="1">N-acetylglucosamine-1-phosphate uridyltransferase</fullName>
        </alternativeName>
    </domain>
    <domain>
        <recommendedName>
            <fullName evidence="1">Glucosamine-1-phosphate N-acetyltransferase</fullName>
            <ecNumber evidence="1">2.3.1.157</ecNumber>
        </recommendedName>
    </domain>
</protein>
<name>GLMU_PARP8</name>
<reference key="1">
    <citation type="journal article" date="2014" name="Stand. Genomic Sci.">
        <title>Complete genome sequence of Burkholderia phymatum STM815(T), a broad host range and efficient nitrogen-fixing symbiont of Mimosa species.</title>
        <authorList>
            <person name="Moulin L."/>
            <person name="Klonowska A."/>
            <person name="Caroline B."/>
            <person name="Booth K."/>
            <person name="Vriezen J.A."/>
            <person name="Melkonian R."/>
            <person name="James E.K."/>
            <person name="Young J.P."/>
            <person name="Bena G."/>
            <person name="Hauser L."/>
            <person name="Land M."/>
            <person name="Kyrpides N."/>
            <person name="Bruce D."/>
            <person name="Chain P."/>
            <person name="Copeland A."/>
            <person name="Pitluck S."/>
            <person name="Woyke T."/>
            <person name="Lizotte-Waniewski M."/>
            <person name="Bristow J."/>
            <person name="Riley M."/>
        </authorList>
    </citation>
    <scope>NUCLEOTIDE SEQUENCE [LARGE SCALE GENOMIC DNA]</scope>
    <source>
        <strain>DSM 17167 / CIP 108236 / LMG 21445 / STM815</strain>
    </source>
</reference>
<comment type="function">
    <text evidence="1">Catalyzes the last two sequential reactions in the de novo biosynthetic pathway for UDP-N-acetylglucosamine (UDP-GlcNAc). The C-terminal domain catalyzes the transfer of acetyl group from acetyl coenzyme A to glucosamine-1-phosphate (GlcN-1-P) to produce N-acetylglucosamine-1-phosphate (GlcNAc-1-P), which is converted into UDP-GlcNAc by the transfer of uridine 5-monophosphate (from uridine 5-triphosphate), a reaction catalyzed by the N-terminal domain.</text>
</comment>
<comment type="catalytic activity">
    <reaction evidence="1">
        <text>alpha-D-glucosamine 1-phosphate + acetyl-CoA = N-acetyl-alpha-D-glucosamine 1-phosphate + CoA + H(+)</text>
        <dbReference type="Rhea" id="RHEA:13725"/>
        <dbReference type="ChEBI" id="CHEBI:15378"/>
        <dbReference type="ChEBI" id="CHEBI:57287"/>
        <dbReference type="ChEBI" id="CHEBI:57288"/>
        <dbReference type="ChEBI" id="CHEBI:57776"/>
        <dbReference type="ChEBI" id="CHEBI:58516"/>
        <dbReference type="EC" id="2.3.1.157"/>
    </reaction>
</comment>
<comment type="catalytic activity">
    <reaction evidence="1">
        <text>N-acetyl-alpha-D-glucosamine 1-phosphate + UTP + H(+) = UDP-N-acetyl-alpha-D-glucosamine + diphosphate</text>
        <dbReference type="Rhea" id="RHEA:13509"/>
        <dbReference type="ChEBI" id="CHEBI:15378"/>
        <dbReference type="ChEBI" id="CHEBI:33019"/>
        <dbReference type="ChEBI" id="CHEBI:46398"/>
        <dbReference type="ChEBI" id="CHEBI:57705"/>
        <dbReference type="ChEBI" id="CHEBI:57776"/>
        <dbReference type="EC" id="2.7.7.23"/>
    </reaction>
</comment>
<comment type="cofactor">
    <cofactor evidence="1">
        <name>Mg(2+)</name>
        <dbReference type="ChEBI" id="CHEBI:18420"/>
    </cofactor>
    <text evidence="1">Binds 1 Mg(2+) ion per subunit.</text>
</comment>
<comment type="pathway">
    <text evidence="1">Nucleotide-sugar biosynthesis; UDP-N-acetyl-alpha-D-glucosamine biosynthesis; N-acetyl-alpha-D-glucosamine 1-phosphate from alpha-D-glucosamine 6-phosphate (route II): step 2/2.</text>
</comment>
<comment type="pathway">
    <text evidence="1">Nucleotide-sugar biosynthesis; UDP-N-acetyl-alpha-D-glucosamine biosynthesis; UDP-N-acetyl-alpha-D-glucosamine from N-acetyl-alpha-D-glucosamine 1-phosphate: step 1/1.</text>
</comment>
<comment type="pathway">
    <text evidence="1">Bacterial outer membrane biogenesis; LPS lipid A biosynthesis.</text>
</comment>
<comment type="subunit">
    <text evidence="1">Homotrimer.</text>
</comment>
<comment type="subcellular location">
    <subcellularLocation>
        <location evidence="1">Cytoplasm</location>
    </subcellularLocation>
</comment>
<comment type="similarity">
    <text evidence="1">In the N-terminal section; belongs to the N-acetylglucosamine-1-phosphate uridyltransferase family.</text>
</comment>
<comment type="similarity">
    <text evidence="1">In the C-terminal section; belongs to the transferase hexapeptide repeat family.</text>
</comment>
<sequence length="453" mass="48184">MNIVILAAGTGKRMRSALPKVLHPLAGRPLLAHVIDTARTLNPTRLVVVVGHGADQVRTAVAASDVQFALQEQQLGTGHAVQQALPLLDPSAPTLVLYGDVPLTKASTLKRLTDAAGHDGYGVLTVTLDDPTGYGRIVRDAQGKVERIVEQKDATAEQQKIAEINTGIVVMPTKRLDGWLSSLKNENAQGEFYLTDVVELAIEAGIEVVTAQPDEEWETLGVNSKQQLAELERIHQRNVADDLLVAGVTIADPARIDVRGTLECGRDVSIDVNCVFEGKVTLGDNVSIGPNCVIRNATIGAGTRIDAYTHIEGAQVGAQAVLGPYARLRPGATLSDETHIGNFVEVKNAVLGHGSKANHLSYIGDSDVGARVNIGAGTITCNYDGANKFRTIIEDDVFVGSDTQLVAPVRVGRGVTIAAGTTVWKDVEEGLLVLNEKTQIGKTGYVRPTKKKS</sequence>
<dbReference type="EC" id="2.7.7.23" evidence="1"/>
<dbReference type="EC" id="2.3.1.157" evidence="1"/>
<dbReference type="EMBL" id="CP001043">
    <property type="protein sequence ID" value="ACC72063.1"/>
    <property type="molecule type" value="Genomic_DNA"/>
</dbReference>
<dbReference type="RefSeq" id="WP_012402242.1">
    <property type="nucleotide sequence ID" value="NC_010622.1"/>
</dbReference>
<dbReference type="SMR" id="B2JIL7"/>
<dbReference type="STRING" id="391038.Bphy_2891"/>
<dbReference type="KEGG" id="bph:Bphy_2891"/>
<dbReference type="eggNOG" id="COG1207">
    <property type="taxonomic scope" value="Bacteria"/>
</dbReference>
<dbReference type="HOGENOM" id="CLU_029499_15_2_4"/>
<dbReference type="OrthoDB" id="9775031at2"/>
<dbReference type="UniPathway" id="UPA00113">
    <property type="reaction ID" value="UER00532"/>
</dbReference>
<dbReference type="UniPathway" id="UPA00113">
    <property type="reaction ID" value="UER00533"/>
</dbReference>
<dbReference type="UniPathway" id="UPA00973"/>
<dbReference type="Proteomes" id="UP000001192">
    <property type="component" value="Chromosome 1"/>
</dbReference>
<dbReference type="GO" id="GO:0005737">
    <property type="term" value="C:cytoplasm"/>
    <property type="evidence" value="ECO:0007669"/>
    <property type="project" value="UniProtKB-SubCell"/>
</dbReference>
<dbReference type="GO" id="GO:0016020">
    <property type="term" value="C:membrane"/>
    <property type="evidence" value="ECO:0007669"/>
    <property type="project" value="GOC"/>
</dbReference>
<dbReference type="GO" id="GO:0019134">
    <property type="term" value="F:glucosamine-1-phosphate N-acetyltransferase activity"/>
    <property type="evidence" value="ECO:0007669"/>
    <property type="project" value="UniProtKB-UniRule"/>
</dbReference>
<dbReference type="GO" id="GO:0000287">
    <property type="term" value="F:magnesium ion binding"/>
    <property type="evidence" value="ECO:0007669"/>
    <property type="project" value="UniProtKB-UniRule"/>
</dbReference>
<dbReference type="GO" id="GO:0003977">
    <property type="term" value="F:UDP-N-acetylglucosamine diphosphorylase activity"/>
    <property type="evidence" value="ECO:0007669"/>
    <property type="project" value="UniProtKB-UniRule"/>
</dbReference>
<dbReference type="GO" id="GO:0000902">
    <property type="term" value="P:cell morphogenesis"/>
    <property type="evidence" value="ECO:0007669"/>
    <property type="project" value="UniProtKB-UniRule"/>
</dbReference>
<dbReference type="GO" id="GO:0071555">
    <property type="term" value="P:cell wall organization"/>
    <property type="evidence" value="ECO:0007669"/>
    <property type="project" value="UniProtKB-KW"/>
</dbReference>
<dbReference type="GO" id="GO:0009245">
    <property type="term" value="P:lipid A biosynthetic process"/>
    <property type="evidence" value="ECO:0007669"/>
    <property type="project" value="UniProtKB-UniRule"/>
</dbReference>
<dbReference type="GO" id="GO:0009252">
    <property type="term" value="P:peptidoglycan biosynthetic process"/>
    <property type="evidence" value="ECO:0007669"/>
    <property type="project" value="UniProtKB-UniRule"/>
</dbReference>
<dbReference type="GO" id="GO:0008360">
    <property type="term" value="P:regulation of cell shape"/>
    <property type="evidence" value="ECO:0007669"/>
    <property type="project" value="UniProtKB-KW"/>
</dbReference>
<dbReference type="GO" id="GO:0006048">
    <property type="term" value="P:UDP-N-acetylglucosamine biosynthetic process"/>
    <property type="evidence" value="ECO:0007669"/>
    <property type="project" value="UniProtKB-UniPathway"/>
</dbReference>
<dbReference type="CDD" id="cd02540">
    <property type="entry name" value="GT2_GlmU_N_bac"/>
    <property type="match status" value="1"/>
</dbReference>
<dbReference type="CDD" id="cd03353">
    <property type="entry name" value="LbH_GlmU_C"/>
    <property type="match status" value="1"/>
</dbReference>
<dbReference type="Gene3D" id="2.160.10.10">
    <property type="entry name" value="Hexapeptide repeat proteins"/>
    <property type="match status" value="1"/>
</dbReference>
<dbReference type="Gene3D" id="3.90.550.10">
    <property type="entry name" value="Spore Coat Polysaccharide Biosynthesis Protein SpsA, Chain A"/>
    <property type="match status" value="1"/>
</dbReference>
<dbReference type="HAMAP" id="MF_01631">
    <property type="entry name" value="GlmU"/>
    <property type="match status" value="1"/>
</dbReference>
<dbReference type="InterPro" id="IPR005882">
    <property type="entry name" value="Bifunctional_GlmU"/>
</dbReference>
<dbReference type="InterPro" id="IPR050065">
    <property type="entry name" value="GlmU-like"/>
</dbReference>
<dbReference type="InterPro" id="IPR038009">
    <property type="entry name" value="GlmU_C_LbH"/>
</dbReference>
<dbReference type="InterPro" id="IPR001451">
    <property type="entry name" value="Hexapep"/>
</dbReference>
<dbReference type="InterPro" id="IPR018357">
    <property type="entry name" value="Hexapep_transf_CS"/>
</dbReference>
<dbReference type="InterPro" id="IPR025877">
    <property type="entry name" value="MobA-like_NTP_Trfase"/>
</dbReference>
<dbReference type="InterPro" id="IPR029044">
    <property type="entry name" value="Nucleotide-diphossugar_trans"/>
</dbReference>
<dbReference type="InterPro" id="IPR011004">
    <property type="entry name" value="Trimer_LpxA-like_sf"/>
</dbReference>
<dbReference type="NCBIfam" id="TIGR01173">
    <property type="entry name" value="glmU"/>
    <property type="match status" value="1"/>
</dbReference>
<dbReference type="PANTHER" id="PTHR43584:SF3">
    <property type="entry name" value="BIFUNCTIONAL PROTEIN GLMU"/>
    <property type="match status" value="1"/>
</dbReference>
<dbReference type="PANTHER" id="PTHR43584">
    <property type="entry name" value="NUCLEOTIDYL TRANSFERASE"/>
    <property type="match status" value="1"/>
</dbReference>
<dbReference type="Pfam" id="PF00132">
    <property type="entry name" value="Hexapep"/>
    <property type="match status" value="2"/>
</dbReference>
<dbReference type="Pfam" id="PF12804">
    <property type="entry name" value="NTP_transf_3"/>
    <property type="match status" value="1"/>
</dbReference>
<dbReference type="SUPFAM" id="SSF53448">
    <property type="entry name" value="Nucleotide-diphospho-sugar transferases"/>
    <property type="match status" value="1"/>
</dbReference>
<dbReference type="SUPFAM" id="SSF51161">
    <property type="entry name" value="Trimeric LpxA-like enzymes"/>
    <property type="match status" value="1"/>
</dbReference>
<dbReference type="PROSITE" id="PS00101">
    <property type="entry name" value="HEXAPEP_TRANSFERASES"/>
    <property type="match status" value="1"/>
</dbReference>
<accession>B2JIL7</accession>
<feature type="chain" id="PRO_1000186418" description="Bifunctional protein GlmU">
    <location>
        <begin position="1"/>
        <end position="453"/>
    </location>
</feature>
<feature type="region of interest" description="Pyrophosphorylase" evidence="1">
    <location>
        <begin position="1"/>
        <end position="225"/>
    </location>
</feature>
<feature type="region of interest" description="Linker" evidence="1">
    <location>
        <begin position="226"/>
        <end position="246"/>
    </location>
</feature>
<feature type="region of interest" description="N-acetyltransferase" evidence="1">
    <location>
        <begin position="247"/>
        <end position="453"/>
    </location>
</feature>
<feature type="active site" description="Proton acceptor" evidence="1">
    <location>
        <position position="359"/>
    </location>
</feature>
<feature type="binding site" evidence="1">
    <location>
        <begin position="6"/>
        <end position="9"/>
    </location>
    <ligand>
        <name>UDP-N-acetyl-alpha-D-glucosamine</name>
        <dbReference type="ChEBI" id="CHEBI:57705"/>
    </ligand>
</feature>
<feature type="binding site" evidence="1">
    <location>
        <position position="20"/>
    </location>
    <ligand>
        <name>UDP-N-acetyl-alpha-D-glucosamine</name>
        <dbReference type="ChEBI" id="CHEBI:57705"/>
    </ligand>
</feature>
<feature type="binding site" evidence="1">
    <location>
        <position position="71"/>
    </location>
    <ligand>
        <name>UDP-N-acetyl-alpha-D-glucosamine</name>
        <dbReference type="ChEBI" id="CHEBI:57705"/>
    </ligand>
</feature>
<feature type="binding site" evidence="1">
    <location>
        <begin position="76"/>
        <end position="77"/>
    </location>
    <ligand>
        <name>UDP-N-acetyl-alpha-D-glucosamine</name>
        <dbReference type="ChEBI" id="CHEBI:57705"/>
    </ligand>
</feature>
<feature type="binding site" evidence="1">
    <location>
        <begin position="98"/>
        <end position="100"/>
    </location>
    <ligand>
        <name>UDP-N-acetyl-alpha-D-glucosamine</name>
        <dbReference type="ChEBI" id="CHEBI:57705"/>
    </ligand>
</feature>
<feature type="binding site" evidence="1">
    <location>
        <position position="100"/>
    </location>
    <ligand>
        <name>Mg(2+)</name>
        <dbReference type="ChEBI" id="CHEBI:18420"/>
    </ligand>
</feature>
<feature type="binding site" evidence="1">
    <location>
        <position position="135"/>
    </location>
    <ligand>
        <name>UDP-N-acetyl-alpha-D-glucosamine</name>
        <dbReference type="ChEBI" id="CHEBI:57705"/>
    </ligand>
</feature>
<feature type="binding site" evidence="1">
    <location>
        <position position="150"/>
    </location>
    <ligand>
        <name>UDP-N-acetyl-alpha-D-glucosamine</name>
        <dbReference type="ChEBI" id="CHEBI:57705"/>
    </ligand>
</feature>
<feature type="binding site" evidence="1">
    <location>
        <position position="165"/>
    </location>
    <ligand>
        <name>UDP-N-acetyl-alpha-D-glucosamine</name>
        <dbReference type="ChEBI" id="CHEBI:57705"/>
    </ligand>
</feature>
<feature type="binding site" evidence="1">
    <location>
        <position position="223"/>
    </location>
    <ligand>
        <name>Mg(2+)</name>
        <dbReference type="ChEBI" id="CHEBI:18420"/>
    </ligand>
</feature>
<feature type="binding site" evidence="1">
    <location>
        <position position="223"/>
    </location>
    <ligand>
        <name>UDP-N-acetyl-alpha-D-glucosamine</name>
        <dbReference type="ChEBI" id="CHEBI:57705"/>
    </ligand>
</feature>
<feature type="binding site" evidence="1">
    <location>
        <position position="329"/>
    </location>
    <ligand>
        <name>UDP-N-acetyl-alpha-D-glucosamine</name>
        <dbReference type="ChEBI" id="CHEBI:57705"/>
    </ligand>
</feature>
<feature type="binding site" evidence="1">
    <location>
        <position position="347"/>
    </location>
    <ligand>
        <name>UDP-N-acetyl-alpha-D-glucosamine</name>
        <dbReference type="ChEBI" id="CHEBI:57705"/>
    </ligand>
</feature>
<feature type="binding site" evidence="1">
    <location>
        <position position="362"/>
    </location>
    <ligand>
        <name>UDP-N-acetyl-alpha-D-glucosamine</name>
        <dbReference type="ChEBI" id="CHEBI:57705"/>
    </ligand>
</feature>
<feature type="binding site" evidence="1">
    <location>
        <position position="373"/>
    </location>
    <ligand>
        <name>UDP-N-acetyl-alpha-D-glucosamine</name>
        <dbReference type="ChEBI" id="CHEBI:57705"/>
    </ligand>
</feature>
<feature type="binding site" evidence="1">
    <location>
        <position position="376"/>
    </location>
    <ligand>
        <name>acetyl-CoA</name>
        <dbReference type="ChEBI" id="CHEBI:57288"/>
    </ligand>
</feature>
<feature type="binding site" evidence="1">
    <location>
        <begin position="382"/>
        <end position="383"/>
    </location>
    <ligand>
        <name>acetyl-CoA</name>
        <dbReference type="ChEBI" id="CHEBI:57288"/>
    </ligand>
</feature>
<feature type="binding site" evidence="1">
    <location>
        <position position="401"/>
    </location>
    <ligand>
        <name>acetyl-CoA</name>
        <dbReference type="ChEBI" id="CHEBI:57288"/>
    </ligand>
</feature>
<feature type="binding site" evidence="1">
    <location>
        <position position="419"/>
    </location>
    <ligand>
        <name>acetyl-CoA</name>
        <dbReference type="ChEBI" id="CHEBI:57288"/>
    </ligand>
</feature>